<accession>Q9UT45</accession>
<accession>Q9UTZ1</accession>
<protein>
    <recommendedName>
        <fullName evidence="10">Primary septum glucan endo-1,3-beta-D-glucosidase</fullName>
    </recommendedName>
    <alternativeName>
        <fullName>Glucan endo-1,3-beta-D-glucosidase 1</fullName>
        <shortName>Endo-1,3-beta-glucanase 1</shortName>
        <ecNumber evidence="12">3.2.1.39</ecNumber>
    </alternativeName>
    <alternativeName>
        <fullName>Laminarinase-1</fullName>
    </alternativeName>
</protein>
<reference key="1">
    <citation type="journal article" date="2002" name="Nature">
        <title>The genome sequence of Schizosaccharomyces pombe.</title>
        <authorList>
            <person name="Wood V."/>
            <person name="Gwilliam R."/>
            <person name="Rajandream M.A."/>
            <person name="Lyne M.H."/>
            <person name="Lyne R."/>
            <person name="Stewart A."/>
            <person name="Sgouros J.G."/>
            <person name="Peat N."/>
            <person name="Hayles J."/>
            <person name="Baker S.G."/>
            <person name="Basham D."/>
            <person name="Bowman S."/>
            <person name="Brooks K."/>
            <person name="Brown D."/>
            <person name="Brown S."/>
            <person name="Chillingworth T."/>
            <person name="Churcher C.M."/>
            <person name="Collins M."/>
            <person name="Connor R."/>
            <person name="Cronin A."/>
            <person name="Davis P."/>
            <person name="Feltwell T."/>
            <person name="Fraser A."/>
            <person name="Gentles S."/>
            <person name="Goble A."/>
            <person name="Hamlin N."/>
            <person name="Harris D.E."/>
            <person name="Hidalgo J."/>
            <person name="Hodgson G."/>
            <person name="Holroyd S."/>
            <person name="Hornsby T."/>
            <person name="Howarth S."/>
            <person name="Huckle E.J."/>
            <person name="Hunt S."/>
            <person name="Jagels K."/>
            <person name="James K.D."/>
            <person name="Jones L."/>
            <person name="Jones M."/>
            <person name="Leather S."/>
            <person name="McDonald S."/>
            <person name="McLean J."/>
            <person name="Mooney P."/>
            <person name="Moule S."/>
            <person name="Mungall K.L."/>
            <person name="Murphy L.D."/>
            <person name="Niblett D."/>
            <person name="Odell C."/>
            <person name="Oliver K."/>
            <person name="O'Neil S."/>
            <person name="Pearson D."/>
            <person name="Quail M.A."/>
            <person name="Rabbinowitsch E."/>
            <person name="Rutherford K.M."/>
            <person name="Rutter S."/>
            <person name="Saunders D."/>
            <person name="Seeger K."/>
            <person name="Sharp S."/>
            <person name="Skelton J."/>
            <person name="Simmonds M.N."/>
            <person name="Squares R."/>
            <person name="Squares S."/>
            <person name="Stevens K."/>
            <person name="Taylor K."/>
            <person name="Taylor R.G."/>
            <person name="Tivey A."/>
            <person name="Walsh S.V."/>
            <person name="Warren T."/>
            <person name="Whitehead S."/>
            <person name="Woodward J.R."/>
            <person name="Volckaert G."/>
            <person name="Aert R."/>
            <person name="Robben J."/>
            <person name="Grymonprez B."/>
            <person name="Weltjens I."/>
            <person name="Vanstreels E."/>
            <person name="Rieger M."/>
            <person name="Schaefer M."/>
            <person name="Mueller-Auer S."/>
            <person name="Gabel C."/>
            <person name="Fuchs M."/>
            <person name="Duesterhoeft A."/>
            <person name="Fritzc C."/>
            <person name="Holzer E."/>
            <person name="Moestl D."/>
            <person name="Hilbert H."/>
            <person name="Borzym K."/>
            <person name="Langer I."/>
            <person name="Beck A."/>
            <person name="Lehrach H."/>
            <person name="Reinhardt R."/>
            <person name="Pohl T.M."/>
            <person name="Eger P."/>
            <person name="Zimmermann W."/>
            <person name="Wedler H."/>
            <person name="Wambutt R."/>
            <person name="Purnelle B."/>
            <person name="Goffeau A."/>
            <person name="Cadieu E."/>
            <person name="Dreano S."/>
            <person name="Gloux S."/>
            <person name="Lelaure V."/>
            <person name="Mottier S."/>
            <person name="Galibert F."/>
            <person name="Aves S.J."/>
            <person name="Xiang Z."/>
            <person name="Hunt C."/>
            <person name="Moore K."/>
            <person name="Hurst S.M."/>
            <person name="Lucas M."/>
            <person name="Rochet M."/>
            <person name="Gaillardin C."/>
            <person name="Tallada V.A."/>
            <person name="Garzon A."/>
            <person name="Thode G."/>
            <person name="Daga R.R."/>
            <person name="Cruzado L."/>
            <person name="Jimenez J."/>
            <person name="Sanchez M."/>
            <person name="del Rey F."/>
            <person name="Benito J."/>
            <person name="Dominguez A."/>
            <person name="Revuelta J.L."/>
            <person name="Moreno S."/>
            <person name="Armstrong J."/>
            <person name="Forsburg S.L."/>
            <person name="Cerutti L."/>
            <person name="Lowe T."/>
            <person name="McCombie W.R."/>
            <person name="Paulsen I."/>
            <person name="Potashkin J."/>
            <person name="Shpakovski G.V."/>
            <person name="Ussery D."/>
            <person name="Barrell B.G."/>
            <person name="Nurse P."/>
        </authorList>
    </citation>
    <scope>NUCLEOTIDE SEQUENCE [LARGE SCALE GENOMIC DNA]</scope>
    <source>
        <strain>972 / ATCC 24843</strain>
    </source>
</reference>
<reference key="2">
    <citation type="journal article" date="2000" name="Genes Cells">
        <title>Large-scale screening of intracellular protein localization in living fission yeast cells by the use of a GFP-fusion genomic DNA library.</title>
        <authorList>
            <person name="Ding D.-Q."/>
            <person name="Tomita Y."/>
            <person name="Yamamoto A."/>
            <person name="Chikashige Y."/>
            <person name="Haraguchi T."/>
            <person name="Hiraoka Y."/>
        </authorList>
    </citation>
    <scope>NUCLEOTIDE SEQUENCE [LARGE SCALE GENOMIC DNA] OF 1-168</scope>
    <scope>SUBCELLULAR LOCATION</scope>
    <source>
        <strain>ATCC 38364 / 968</strain>
    </source>
</reference>
<reference key="3">
    <citation type="journal article" date="2003" name="J. Cell Sci.">
        <title>The endo-beta-1,3-glucanase eng1p is required for dissolution of the primary septum during cell separation in Schizosaccharomyces pombe.</title>
        <authorList>
            <person name="Martin-Cuadrado A.B."/>
            <person name="Duenas E."/>
            <person name="Sipiczki M."/>
            <person name="de Aldana C.R.V."/>
            <person name="del Rey F."/>
        </authorList>
    </citation>
    <scope>FUNCTION</scope>
    <scope>CATALYTIC ACTIVITY</scope>
    <scope>SUBCELLULAR LOCATION</scope>
</reference>
<reference key="4">
    <citation type="journal article" date="2008" name="Mol. Microbiol.">
        <title>The Schizosaccharomyces pombe endo-1,3-beta-glucanase Eng1 contains a novel carbohydrate binding module required for septum localization.</title>
        <authorList>
            <person name="Martin-Cuadrado A.B."/>
            <person name="Encinar del Dedo J."/>
            <person name="de Medina-Redondo M."/>
            <person name="Fontaine T."/>
            <person name="del Rey F."/>
            <person name="Latge J.P."/>
            <person name="Vazquez de Aldana C.R."/>
        </authorList>
    </citation>
    <scope>FUNCTION</scope>
    <scope>SUBCELLULAR LOCATION</scope>
    <scope>DISRUPTION PHENOTYPE</scope>
</reference>
<reference key="5">
    <citation type="journal article" date="2009" name="Eukaryot. Cell">
        <title>{beta}-glucanase Eng2 is required for ascus wall endolysis after sporulation in the fission yeast Schizosaccharomyces pombe.</title>
        <authorList>
            <person name="Encinar del Dedo J."/>
            <person name="Duenas E."/>
            <person name="Arnaiz Y."/>
            <person name="del Rey F."/>
            <person name="Vazquez de Aldana C.R."/>
        </authorList>
    </citation>
    <scope>DISRUPTION PHENOTYPE</scope>
</reference>
<feature type="signal peptide" evidence="2">
    <location>
        <begin position="1"/>
        <end position="20"/>
    </location>
</feature>
<feature type="chain" id="PRO_0000012132" description="Primary septum glucan endo-1,3-beta-D-glucosidase">
    <location>
        <begin position="21"/>
        <end position="1016"/>
    </location>
</feature>
<feature type="domain" description="GH81" evidence="3">
    <location>
        <begin position="45"/>
        <end position="741"/>
    </location>
</feature>
<feature type="region of interest" description="beta-sandwich subdomain" evidence="3">
    <location>
        <begin position="45"/>
        <end position="272"/>
    </location>
</feature>
<feature type="region of interest" description="alpha/beta subdomain" evidence="3">
    <location>
        <begin position="273"/>
        <end position="364"/>
    </location>
</feature>
<feature type="region of interest" description="(alpha/beta)6 barrel subdomain" evidence="3">
    <location>
        <begin position="379"/>
        <end position="741"/>
    </location>
</feature>
<feature type="region of interest" description="Required for catalytic activity against insoluble beta-glucan and to restrict localization of the enzyme to the cell septum" evidence="7">
    <location>
        <begin position="748"/>
        <end position="1016"/>
    </location>
</feature>
<feature type="region of interest" description="Disordered" evidence="4">
    <location>
        <begin position="844"/>
        <end position="872"/>
    </location>
</feature>
<feature type="active site" evidence="3">
    <location>
        <position position="492"/>
    </location>
</feature>
<feature type="active site" evidence="3">
    <location>
        <position position="569"/>
    </location>
</feature>
<feature type="active site" evidence="3">
    <location>
        <position position="573"/>
    </location>
</feature>
<feature type="binding site" evidence="1">
    <location>
        <position position="496"/>
    </location>
    <ligand>
        <name>(1,3-beta-D-glucosyl)n</name>
        <dbReference type="ChEBI" id="CHEBI:37671"/>
    </ligand>
</feature>
<feature type="binding site" evidence="1">
    <location>
        <position position="567"/>
    </location>
    <ligand>
        <name>(1,3-beta-D-glucosyl)n</name>
        <dbReference type="ChEBI" id="CHEBI:37671"/>
    </ligand>
</feature>
<feature type="binding site" evidence="1">
    <location>
        <position position="569"/>
    </location>
    <ligand>
        <name>(1,3-beta-D-glucosyl)n</name>
        <dbReference type="ChEBI" id="CHEBI:37671"/>
    </ligand>
</feature>
<feature type="binding site" evidence="1">
    <location>
        <position position="573"/>
    </location>
    <ligand>
        <name>(1,3-beta-D-glucosyl)n</name>
        <dbReference type="ChEBI" id="CHEBI:37671"/>
    </ligand>
</feature>
<feature type="binding site" evidence="1">
    <location>
        <position position="650"/>
    </location>
    <ligand>
        <name>(1,3-beta-D-glucosyl)n</name>
        <dbReference type="ChEBI" id="CHEBI:37671"/>
    </ligand>
</feature>
<feature type="glycosylation site" description="N-linked (GlcNAc...) asparagine" evidence="2">
    <location>
        <position position="37"/>
    </location>
</feature>
<sequence length="1016" mass="109743">MSSYLRSFIFGLLTISLAQCSPILKDTKDTKFSTGSNISLKKRDTNVFDSVVDTINPASYFGTVSHPVTPAGVSTDSLSSPIETNKFFDNNLLGSRTNFMYADPFRYWWQSSDTMGGICIAHTDDNQRVMDTDDTIPSYYYEPIGICSLGFGASGITSNTDPIVDEIDQMSARFTFSWDSSSMQLTLTEGMAVTTAVYTNAIPQIFSSTLYINDFVEVPGTSAVQKYRVTMSDNHVWLIYIYGDSLTLTESTSQMLVGSNTFNGYIQIAKIPLGDGTAEALYDTYAGVYITGISISGYVEDAVGYYSFDFTTAGDTSVEPLFFLLPHQVDTAVSGTKVTSIVLASLVSGDMNAAAGNSITFAEAIPQDIGFLPWSPTGGQIGYSEEALEIIAEVAGTELGEDFSANSNLNSMYYSGKVLAKYAMLCVTINDILGDETSSEQCIQKLEAAFARFVDNQQIYPLTYDNTWKGVVSVAGLSGDSLADFGNSYYNDHHFHYGYFVFTAAVIGHIDPDWINTGNNKEWVNFLVRDVANPSSNDPYFPKHRMIDIYHGHGWASGLFESNDGKDEESTSEDYNFFFGMKLWGQVIGDSDMEDRANIILGIERNALNKYMLYADGNVQPTSMQPNYVAGITFMNKITHTTYFGTNIEYIQGIHMLPITPISAFIRGPSFVLAEWNALLASVIDYVDSGWRSLLYANLAIAEPEESYEYFSSSDFNTDYLDDGASRAWYLAYAAGLWANDAVYYPVSSSSTTTTSTSTGSVTTTSTTATASCTLPISYTSTPTTTSISGTCNGATFDASLYVCDGTVLCPIVNGVSYQNCNGACYNPSQYGCDNGALGPVQSSSTTSSITPTPTTTSSITPTPTTTSTTTTAQSTGMQLCGSNYYDASSYYCDNDQLCPIIDGVDYLSCNGACYNPSQYVCSDGSLSPNTVTTTKATTTFTPTPTTTTTPTPTTTSATSTNVIAQCGSAWYDSQSYICYGNILCPIINGSPLLACGNACYDSSIYGCSNGALVAA</sequence>
<gene>
    <name evidence="9 13" type="primary">eng1</name>
    <name evidence="13" type="ORF">SPAC821.09</name>
</gene>
<organism>
    <name type="scientific">Schizosaccharomyces pombe (strain 972 / ATCC 24843)</name>
    <name type="common">Fission yeast</name>
    <dbReference type="NCBI Taxonomy" id="284812"/>
    <lineage>
        <taxon>Eukaryota</taxon>
        <taxon>Fungi</taxon>
        <taxon>Dikarya</taxon>
        <taxon>Ascomycota</taxon>
        <taxon>Taphrinomycotina</taxon>
        <taxon>Schizosaccharomycetes</taxon>
        <taxon>Schizosaccharomycetales</taxon>
        <taxon>Schizosaccharomycetaceae</taxon>
        <taxon>Schizosaccharomyces</taxon>
    </lineage>
</organism>
<keyword id="KW-0119">Carbohydrate metabolism</keyword>
<keyword id="KW-0131">Cell cycle</keyword>
<keyword id="KW-0132">Cell division</keyword>
<keyword id="KW-0961">Cell wall biogenesis/degradation</keyword>
<keyword id="KW-0325">Glycoprotein</keyword>
<keyword id="KW-0326">Glycosidase</keyword>
<keyword id="KW-0378">Hydrolase</keyword>
<keyword id="KW-0624">Polysaccharide degradation</keyword>
<keyword id="KW-1185">Reference proteome</keyword>
<keyword id="KW-0732">Signal</keyword>
<name>ENG1_SCHPO</name>
<dbReference type="EC" id="3.2.1.39" evidence="12"/>
<dbReference type="EMBL" id="CU329670">
    <property type="protein sequence ID" value="CAB57443.1"/>
    <property type="molecule type" value="Genomic_DNA"/>
</dbReference>
<dbReference type="EMBL" id="AB027918">
    <property type="protein sequence ID" value="BAA87222.1"/>
    <property type="status" value="ALT_SEQ"/>
    <property type="molecule type" value="Genomic_DNA"/>
</dbReference>
<dbReference type="PIR" id="T41720">
    <property type="entry name" value="T41720"/>
</dbReference>
<dbReference type="RefSeq" id="NP_593162.1">
    <property type="nucleotide sequence ID" value="NM_001018560.2"/>
</dbReference>
<dbReference type="SMR" id="Q9UT45"/>
<dbReference type="BioGRID" id="279801">
    <property type="interactions" value="17"/>
</dbReference>
<dbReference type="FunCoup" id="Q9UT45">
    <property type="interactions" value="28"/>
</dbReference>
<dbReference type="STRING" id="284812.Q9UT45"/>
<dbReference type="CAZy" id="CBM52">
    <property type="family name" value="Carbohydrate-Binding Module Family 52"/>
</dbReference>
<dbReference type="CAZy" id="GH81">
    <property type="family name" value="Glycoside Hydrolase Family 81"/>
</dbReference>
<dbReference type="GlyCosmos" id="Q9UT45">
    <property type="glycosylation" value="1 site, No reported glycans"/>
</dbReference>
<dbReference type="iPTMnet" id="Q9UT45"/>
<dbReference type="PaxDb" id="4896-SPAC821.09.1"/>
<dbReference type="EnsemblFungi" id="SPAC821.09.1">
    <property type="protein sequence ID" value="SPAC821.09.1:pep"/>
    <property type="gene ID" value="SPAC821.09"/>
</dbReference>
<dbReference type="GeneID" id="2543379"/>
<dbReference type="KEGG" id="spo:2543379"/>
<dbReference type="PomBase" id="SPAC821.09">
    <property type="gene designation" value="eng1"/>
</dbReference>
<dbReference type="VEuPathDB" id="FungiDB:SPAC821.09"/>
<dbReference type="eggNOG" id="KOG2254">
    <property type="taxonomic scope" value="Eukaryota"/>
</dbReference>
<dbReference type="HOGENOM" id="CLU_005482_2_1_1"/>
<dbReference type="InParanoid" id="Q9UT45"/>
<dbReference type="OMA" id="HYPGWTS"/>
<dbReference type="PhylomeDB" id="Q9UT45"/>
<dbReference type="PRO" id="PR:Q9UT45"/>
<dbReference type="Proteomes" id="UP000002485">
    <property type="component" value="Chromosome I"/>
</dbReference>
<dbReference type="GO" id="GO:0009986">
    <property type="term" value="C:cell surface"/>
    <property type="evidence" value="ECO:0000314"/>
    <property type="project" value="PomBase"/>
</dbReference>
<dbReference type="GO" id="GO:0000935">
    <property type="term" value="C:division septum"/>
    <property type="evidence" value="ECO:0000314"/>
    <property type="project" value="PomBase"/>
</dbReference>
<dbReference type="GO" id="GO:0005576">
    <property type="term" value="C:extracellular region"/>
    <property type="evidence" value="ECO:0000314"/>
    <property type="project" value="PomBase"/>
</dbReference>
<dbReference type="GO" id="GO:1990819">
    <property type="term" value="C:mating projection actin fusion focus"/>
    <property type="evidence" value="ECO:0000314"/>
    <property type="project" value="PomBase"/>
</dbReference>
<dbReference type="GO" id="GO:0000936">
    <property type="term" value="C:primary cell septum"/>
    <property type="evidence" value="ECO:0000314"/>
    <property type="project" value="PomBase"/>
</dbReference>
<dbReference type="GO" id="GO:0052861">
    <property type="term" value="F:endo-1,3(4)-beta-glucanase activity"/>
    <property type="evidence" value="ECO:0007669"/>
    <property type="project" value="UniProtKB-EC"/>
</dbReference>
<dbReference type="GO" id="GO:0042973">
    <property type="term" value="F:glucan endo-1,3-beta-D-glucosidase activity"/>
    <property type="evidence" value="ECO:0000314"/>
    <property type="project" value="PomBase"/>
</dbReference>
<dbReference type="GO" id="GO:0030247">
    <property type="term" value="F:polysaccharide binding"/>
    <property type="evidence" value="ECO:0000314"/>
    <property type="project" value="PomBase"/>
</dbReference>
<dbReference type="GO" id="GO:0044347">
    <property type="term" value="P:cell wall polysaccharide catabolic process"/>
    <property type="evidence" value="ECO:0000305"/>
    <property type="project" value="PomBase"/>
</dbReference>
<dbReference type="GO" id="GO:1904541">
    <property type="term" value="P:fungal-type cell wall disassembly involved in conjugation with cellular fusion"/>
    <property type="evidence" value="ECO:0000315"/>
    <property type="project" value="PomBase"/>
</dbReference>
<dbReference type="GO" id="GO:0030994">
    <property type="term" value="P:primary cell septum disassembly"/>
    <property type="evidence" value="ECO:0000315"/>
    <property type="project" value="UniProtKB"/>
</dbReference>
<dbReference type="FunFam" id="1.10.287.1170:FF:000001">
    <property type="entry name" value="Endo-1,3-beta-glucanase Engl1"/>
    <property type="match status" value="1"/>
</dbReference>
<dbReference type="Gene3D" id="1.10.287.1170">
    <property type="entry name" value="glycoside hydrolase family 81 endo-[beta] glucanase"/>
    <property type="match status" value="1"/>
</dbReference>
<dbReference type="Gene3D" id="2.70.98.30">
    <property type="entry name" value="Golgi alpha-mannosidase II, domain 4"/>
    <property type="match status" value="1"/>
</dbReference>
<dbReference type="Gene3D" id="1.20.5.420">
    <property type="entry name" value="Immunoglobulin FC, subunit C"/>
    <property type="match status" value="1"/>
</dbReference>
<dbReference type="InterPro" id="IPR005200">
    <property type="entry name" value="Endo-beta-glucanase"/>
</dbReference>
<dbReference type="InterPro" id="IPR018909">
    <property type="entry name" value="Eng1_septum"/>
</dbReference>
<dbReference type="InterPro" id="IPR040720">
    <property type="entry name" value="GH81_C"/>
</dbReference>
<dbReference type="InterPro" id="IPR040451">
    <property type="entry name" value="GH81_N"/>
</dbReference>
<dbReference type="PANTHER" id="PTHR31983">
    <property type="entry name" value="ENDO-1,3(4)-BETA-GLUCANASE 1"/>
    <property type="match status" value="1"/>
</dbReference>
<dbReference type="PANTHER" id="PTHR31983:SF21">
    <property type="entry name" value="PRIMARY SEPTUM GLUCAN ENDO-1,3-BETA-D-GLUCOSIDASE"/>
    <property type="match status" value="1"/>
</dbReference>
<dbReference type="Pfam" id="PF10645">
    <property type="entry name" value="Carb_bind"/>
    <property type="match status" value="3"/>
</dbReference>
<dbReference type="Pfam" id="PF17652">
    <property type="entry name" value="Glyco_hydro81C"/>
    <property type="match status" value="1"/>
</dbReference>
<dbReference type="Pfam" id="PF03639">
    <property type="entry name" value="Glyco_hydro_81"/>
    <property type="match status" value="1"/>
</dbReference>
<dbReference type="PROSITE" id="PS52008">
    <property type="entry name" value="GH81"/>
    <property type="match status" value="1"/>
</dbReference>
<comment type="function">
    <text evidence="6 7 12">Cleaves internal linkages in 1,3-beta-glucan (Probable). Has a role in cell separation where it is required for the degradation of the primary septum after completion of cytokinesis (PubMed:12665550, PubMed:18466295).</text>
</comment>
<comment type="catalytic activity">
    <reaction evidence="12">
        <text>Hydrolysis of (1-&gt;3)-beta-D-glucosidic linkages in (1-&gt;3)-beta-D-glucans.</text>
        <dbReference type="EC" id="3.2.1.39"/>
    </reaction>
</comment>
<comment type="subcellular location">
    <subcellularLocation>
        <location evidence="5 6 7">Cell septum</location>
    </subcellularLocation>
    <text evidence="5 6 7">Localized in a ring-like structure around the septum.</text>
</comment>
<comment type="disruption phenotype">
    <text evidence="7 8">Decreases basal endo-1,3-beta-glucanase activity (PubMed:19542306). Cells do not separate normally after cytokinesis resulting in chained cells (PubMed:18466295).</text>
</comment>
<comment type="similarity">
    <text evidence="3 11">Belongs to the glycosyl hydrolase 81 family.</text>
</comment>
<proteinExistence type="evidence at protein level"/>
<evidence type="ECO:0000250" key="1">
    <source>
        <dbReference type="UniProtKB" id="A0A023I7E1"/>
    </source>
</evidence>
<evidence type="ECO:0000255" key="2"/>
<evidence type="ECO:0000255" key="3">
    <source>
        <dbReference type="PROSITE-ProRule" id="PRU01352"/>
    </source>
</evidence>
<evidence type="ECO:0000256" key="4">
    <source>
        <dbReference type="SAM" id="MobiDB-lite"/>
    </source>
</evidence>
<evidence type="ECO:0000269" key="5">
    <source>
    </source>
</evidence>
<evidence type="ECO:0000269" key="6">
    <source>
    </source>
</evidence>
<evidence type="ECO:0000269" key="7">
    <source>
    </source>
</evidence>
<evidence type="ECO:0000269" key="8">
    <source>
    </source>
</evidence>
<evidence type="ECO:0000303" key="9">
    <source>
    </source>
</evidence>
<evidence type="ECO:0000303" key="10">
    <source>
    </source>
</evidence>
<evidence type="ECO:0000305" key="11"/>
<evidence type="ECO:0000305" key="12">
    <source>
    </source>
</evidence>
<evidence type="ECO:0000312" key="13">
    <source>
        <dbReference type="PomBase" id="SPAC821.09"/>
    </source>
</evidence>